<protein>
    <recommendedName>
        <fullName evidence="1">Ribosomal RNA small subunit methyltransferase A</fullName>
        <ecNumber evidence="1">2.1.1.182</ecNumber>
    </recommendedName>
    <alternativeName>
        <fullName evidence="1">16S rRNA (adenine(1518)-N(6)/adenine(1519)-N(6))-dimethyltransferase</fullName>
    </alternativeName>
    <alternativeName>
        <fullName evidence="1">16S rRNA dimethyladenosine transferase</fullName>
    </alternativeName>
    <alternativeName>
        <fullName evidence="1">16S rRNA dimethylase</fullName>
    </alternativeName>
    <alternativeName>
        <fullName evidence="1">S-adenosylmethionine-6-N', N'-adenosyl(rRNA) dimethyltransferase</fullName>
    </alternativeName>
</protein>
<sequence length="273" mass="30454">MNNRVHQGHLARKRFGQNFLNDQFVIDSIVSAINPQKGQAMVEIGPGLAALTEPVGERLDQLTVIELDRDLAARLQTHPFLGPKLTIYQQDAMTFNFGELAEKMGQPLRVFGNLPYNISTPLMFHLFSYTDAIADMHFMLQKEVVNRLVAGPNSKAYGRLSVMAQYYCNVIPVLEVPPSAFTPPPKVDSAVVRLVPHATMPHPVKDVRVLSRITTEAFNQRRKTIRNSLGNLFSVEVLTGMGIDPAMRAENISVAQYCQMANYLAENAPFQES</sequence>
<evidence type="ECO:0000255" key="1">
    <source>
        <dbReference type="HAMAP-Rule" id="MF_00607"/>
    </source>
</evidence>
<dbReference type="EC" id="2.1.1.182" evidence="1"/>
<dbReference type="EMBL" id="AE005174">
    <property type="protein sequence ID" value="AAG54356.1"/>
    <property type="molecule type" value="Genomic_DNA"/>
</dbReference>
<dbReference type="EMBL" id="BA000007">
    <property type="protein sequence ID" value="BAB33479.1"/>
    <property type="molecule type" value="Genomic_DNA"/>
</dbReference>
<dbReference type="PIR" id="H85486">
    <property type="entry name" value="H85486"/>
</dbReference>
<dbReference type="PIR" id="H90635">
    <property type="entry name" value="H90635"/>
</dbReference>
<dbReference type="RefSeq" id="NP_308083.1">
    <property type="nucleotide sequence ID" value="NC_002695.1"/>
</dbReference>
<dbReference type="RefSeq" id="WP_001065380.1">
    <property type="nucleotide sequence ID" value="NZ_VOAI01000002.1"/>
</dbReference>
<dbReference type="SMR" id="Q8XA14"/>
<dbReference type="STRING" id="155864.Z0060"/>
<dbReference type="GeneID" id="913455"/>
<dbReference type="KEGG" id="ece:Z0060"/>
<dbReference type="KEGG" id="ecs:ECs_0056"/>
<dbReference type="PATRIC" id="fig|386585.9.peg.155"/>
<dbReference type="eggNOG" id="COG0030">
    <property type="taxonomic scope" value="Bacteria"/>
</dbReference>
<dbReference type="HOGENOM" id="CLU_041220_0_1_6"/>
<dbReference type="OMA" id="GMFQKEV"/>
<dbReference type="Proteomes" id="UP000000558">
    <property type="component" value="Chromosome"/>
</dbReference>
<dbReference type="Proteomes" id="UP000002519">
    <property type="component" value="Chromosome"/>
</dbReference>
<dbReference type="GO" id="GO:0005829">
    <property type="term" value="C:cytosol"/>
    <property type="evidence" value="ECO:0007669"/>
    <property type="project" value="TreeGrafter"/>
</dbReference>
<dbReference type="GO" id="GO:0052908">
    <property type="term" value="F:16S rRNA (adenine(1518)-N(6)/adenine(1519)-N(6))-dimethyltransferase activity"/>
    <property type="evidence" value="ECO:0007669"/>
    <property type="project" value="UniProtKB-EC"/>
</dbReference>
<dbReference type="GO" id="GO:0003723">
    <property type="term" value="F:RNA binding"/>
    <property type="evidence" value="ECO:0007669"/>
    <property type="project" value="UniProtKB-KW"/>
</dbReference>
<dbReference type="FunFam" id="1.10.8.100:FF:000001">
    <property type="entry name" value="Ribosomal RNA small subunit methyltransferase A"/>
    <property type="match status" value="1"/>
</dbReference>
<dbReference type="FunFam" id="3.40.50.150:FF:000006">
    <property type="entry name" value="Ribosomal RNA small subunit methyltransferase A"/>
    <property type="match status" value="1"/>
</dbReference>
<dbReference type="Gene3D" id="1.10.8.100">
    <property type="entry name" value="Ribosomal RNA adenine dimethylase-like, domain 2"/>
    <property type="match status" value="1"/>
</dbReference>
<dbReference type="Gene3D" id="3.40.50.150">
    <property type="entry name" value="Vaccinia Virus protein VP39"/>
    <property type="match status" value="1"/>
</dbReference>
<dbReference type="HAMAP" id="MF_00607">
    <property type="entry name" value="16SrRNA_methyltr_A"/>
    <property type="match status" value="1"/>
</dbReference>
<dbReference type="InterPro" id="IPR001737">
    <property type="entry name" value="KsgA/Erm"/>
</dbReference>
<dbReference type="InterPro" id="IPR023165">
    <property type="entry name" value="rRNA_Ade_diMease-like_C"/>
</dbReference>
<dbReference type="InterPro" id="IPR020596">
    <property type="entry name" value="rRNA_Ade_Mease_Trfase_CS"/>
</dbReference>
<dbReference type="InterPro" id="IPR020598">
    <property type="entry name" value="rRNA_Ade_methylase_Trfase_N"/>
</dbReference>
<dbReference type="InterPro" id="IPR011530">
    <property type="entry name" value="rRNA_adenine_dimethylase"/>
</dbReference>
<dbReference type="InterPro" id="IPR029063">
    <property type="entry name" value="SAM-dependent_MTases_sf"/>
</dbReference>
<dbReference type="NCBIfam" id="TIGR00755">
    <property type="entry name" value="ksgA"/>
    <property type="match status" value="1"/>
</dbReference>
<dbReference type="PANTHER" id="PTHR11727">
    <property type="entry name" value="DIMETHYLADENOSINE TRANSFERASE"/>
    <property type="match status" value="1"/>
</dbReference>
<dbReference type="PANTHER" id="PTHR11727:SF7">
    <property type="entry name" value="DIMETHYLADENOSINE TRANSFERASE-RELATED"/>
    <property type="match status" value="1"/>
</dbReference>
<dbReference type="Pfam" id="PF00398">
    <property type="entry name" value="RrnaAD"/>
    <property type="match status" value="1"/>
</dbReference>
<dbReference type="SMART" id="SM00650">
    <property type="entry name" value="rADc"/>
    <property type="match status" value="1"/>
</dbReference>
<dbReference type="SUPFAM" id="SSF53335">
    <property type="entry name" value="S-adenosyl-L-methionine-dependent methyltransferases"/>
    <property type="match status" value="1"/>
</dbReference>
<dbReference type="PROSITE" id="PS01131">
    <property type="entry name" value="RRNA_A_DIMETH"/>
    <property type="match status" value="1"/>
</dbReference>
<dbReference type="PROSITE" id="PS51689">
    <property type="entry name" value="SAM_RNA_A_N6_MT"/>
    <property type="match status" value="1"/>
</dbReference>
<feature type="chain" id="PRO_0000101526" description="Ribosomal RNA small subunit methyltransferase A">
    <location>
        <begin position="1"/>
        <end position="273"/>
    </location>
</feature>
<feature type="binding site" evidence="1">
    <location>
        <position position="18"/>
    </location>
    <ligand>
        <name>S-adenosyl-L-methionine</name>
        <dbReference type="ChEBI" id="CHEBI:59789"/>
    </ligand>
</feature>
<feature type="binding site" evidence="1">
    <location>
        <position position="20"/>
    </location>
    <ligand>
        <name>S-adenosyl-L-methionine</name>
        <dbReference type="ChEBI" id="CHEBI:59789"/>
    </ligand>
</feature>
<feature type="binding site" evidence="1">
    <location>
        <position position="45"/>
    </location>
    <ligand>
        <name>S-adenosyl-L-methionine</name>
        <dbReference type="ChEBI" id="CHEBI:59789"/>
    </ligand>
</feature>
<feature type="binding site" evidence="1">
    <location>
        <position position="66"/>
    </location>
    <ligand>
        <name>S-adenosyl-L-methionine</name>
        <dbReference type="ChEBI" id="CHEBI:59789"/>
    </ligand>
</feature>
<feature type="binding site" evidence="1">
    <location>
        <position position="91"/>
    </location>
    <ligand>
        <name>S-adenosyl-L-methionine</name>
        <dbReference type="ChEBI" id="CHEBI:59789"/>
    </ligand>
</feature>
<feature type="binding site" evidence="1">
    <location>
        <position position="113"/>
    </location>
    <ligand>
        <name>S-adenosyl-L-methionine</name>
        <dbReference type="ChEBI" id="CHEBI:59789"/>
    </ligand>
</feature>
<comment type="function">
    <text evidence="1">Specifically dimethylates two adjacent adenosines (A1518 and A1519) in the loop of a conserved hairpin near the 3'-end of 16S rRNA in the 30S particle. May play a critical role in biogenesis of 30S subunits.</text>
</comment>
<comment type="catalytic activity">
    <reaction evidence="1">
        <text>adenosine(1518)/adenosine(1519) in 16S rRNA + 4 S-adenosyl-L-methionine = N(6)-dimethyladenosine(1518)/N(6)-dimethyladenosine(1519) in 16S rRNA + 4 S-adenosyl-L-homocysteine + 4 H(+)</text>
        <dbReference type="Rhea" id="RHEA:19609"/>
        <dbReference type="Rhea" id="RHEA-COMP:10232"/>
        <dbReference type="Rhea" id="RHEA-COMP:10233"/>
        <dbReference type="ChEBI" id="CHEBI:15378"/>
        <dbReference type="ChEBI" id="CHEBI:57856"/>
        <dbReference type="ChEBI" id="CHEBI:59789"/>
        <dbReference type="ChEBI" id="CHEBI:74411"/>
        <dbReference type="ChEBI" id="CHEBI:74493"/>
        <dbReference type="EC" id="2.1.1.182"/>
    </reaction>
</comment>
<comment type="subcellular location">
    <subcellularLocation>
        <location evidence="1">Cytoplasm</location>
    </subcellularLocation>
</comment>
<comment type="similarity">
    <text evidence="1">Belongs to the class I-like SAM-binding methyltransferase superfamily. rRNA adenine N(6)-methyltransferase family. RsmA subfamily.</text>
</comment>
<keyword id="KW-0963">Cytoplasm</keyword>
<keyword id="KW-0489">Methyltransferase</keyword>
<keyword id="KW-1185">Reference proteome</keyword>
<keyword id="KW-0694">RNA-binding</keyword>
<keyword id="KW-0698">rRNA processing</keyword>
<keyword id="KW-0949">S-adenosyl-L-methionine</keyword>
<keyword id="KW-0808">Transferase</keyword>
<reference key="1">
    <citation type="journal article" date="2001" name="Nature">
        <title>Genome sequence of enterohaemorrhagic Escherichia coli O157:H7.</title>
        <authorList>
            <person name="Perna N.T."/>
            <person name="Plunkett G. III"/>
            <person name="Burland V."/>
            <person name="Mau B."/>
            <person name="Glasner J.D."/>
            <person name="Rose D.J."/>
            <person name="Mayhew G.F."/>
            <person name="Evans P.S."/>
            <person name="Gregor J."/>
            <person name="Kirkpatrick H.A."/>
            <person name="Posfai G."/>
            <person name="Hackett J."/>
            <person name="Klink S."/>
            <person name="Boutin A."/>
            <person name="Shao Y."/>
            <person name="Miller L."/>
            <person name="Grotbeck E.J."/>
            <person name="Davis N.W."/>
            <person name="Lim A."/>
            <person name="Dimalanta E.T."/>
            <person name="Potamousis K."/>
            <person name="Apodaca J."/>
            <person name="Anantharaman T.S."/>
            <person name="Lin J."/>
            <person name="Yen G."/>
            <person name="Schwartz D.C."/>
            <person name="Welch R.A."/>
            <person name="Blattner F.R."/>
        </authorList>
    </citation>
    <scope>NUCLEOTIDE SEQUENCE [LARGE SCALE GENOMIC DNA]</scope>
    <source>
        <strain>O157:H7 / EDL933 / ATCC 700927 / EHEC</strain>
    </source>
</reference>
<reference key="2">
    <citation type="journal article" date="2001" name="DNA Res.">
        <title>Complete genome sequence of enterohemorrhagic Escherichia coli O157:H7 and genomic comparison with a laboratory strain K-12.</title>
        <authorList>
            <person name="Hayashi T."/>
            <person name="Makino K."/>
            <person name="Ohnishi M."/>
            <person name="Kurokawa K."/>
            <person name="Ishii K."/>
            <person name="Yokoyama K."/>
            <person name="Han C.-G."/>
            <person name="Ohtsubo E."/>
            <person name="Nakayama K."/>
            <person name="Murata T."/>
            <person name="Tanaka M."/>
            <person name="Tobe T."/>
            <person name="Iida T."/>
            <person name="Takami H."/>
            <person name="Honda T."/>
            <person name="Sasakawa C."/>
            <person name="Ogasawara N."/>
            <person name="Yasunaga T."/>
            <person name="Kuhara S."/>
            <person name="Shiba T."/>
            <person name="Hattori M."/>
            <person name="Shinagawa H."/>
        </authorList>
    </citation>
    <scope>NUCLEOTIDE SEQUENCE [LARGE SCALE GENOMIC DNA]</scope>
    <source>
        <strain>O157:H7 / Sakai / RIMD 0509952 / EHEC</strain>
    </source>
</reference>
<gene>
    <name evidence="1" type="primary">rsmA</name>
    <name evidence="1" type="synonym">ksgA</name>
    <name type="ordered locus">Z0060</name>
    <name type="ordered locus">ECs0056</name>
</gene>
<name>RSMA_ECO57</name>
<organism>
    <name type="scientific">Escherichia coli O157:H7</name>
    <dbReference type="NCBI Taxonomy" id="83334"/>
    <lineage>
        <taxon>Bacteria</taxon>
        <taxon>Pseudomonadati</taxon>
        <taxon>Pseudomonadota</taxon>
        <taxon>Gammaproteobacteria</taxon>
        <taxon>Enterobacterales</taxon>
        <taxon>Enterobacteriaceae</taxon>
        <taxon>Escherichia</taxon>
    </lineage>
</organism>
<accession>Q8XA14</accession>
<proteinExistence type="inferred from homology"/>